<reference key="1">
    <citation type="journal article" date="1994" name="Genomics">
        <title>Molecular cloning and characterization of the mouse medium-chain acyl-CoA dehydrogenase cDNA.</title>
        <authorList>
            <person name="Tolwani R.J."/>
            <person name="Farmer S.C."/>
            <person name="Wood P.A."/>
        </authorList>
    </citation>
    <scope>NUCLEOTIDE SEQUENCE [MRNA]</scope>
    <source>
        <strain>BALB/cJ</strain>
        <tissue>Liver</tissue>
    </source>
</reference>
<reference key="2">
    <citation type="journal article" date="1992" name="Prog. Clin. Biol. Res.">
        <title>Molecular studies of mouse medium and long-chain acyl-CoA dehydrogenase genes for site-directed mutagenesis of embryonic stem cells.</title>
        <authorList>
            <person name="Wood P.A."/>
            <person name="Farmer S.C."/>
            <person name="Tolwani R.J."/>
            <person name="Warren J.R."/>
            <person name="Steinkampf M.P."/>
            <person name="Johnson L.W."/>
            <person name="Mountz J.D."/>
            <person name="Kelly D.P."/>
        </authorList>
    </citation>
    <scope>NUCLEOTIDE SEQUENCE [GENOMIC DNA] OF 134-193</scope>
</reference>
<reference key="3">
    <citation type="journal article" date="2005" name="PLoS Genet.">
        <title>Medium-chain acyl-CoA dehydrogenase deficiency in gene-targeted mice.</title>
        <authorList>
            <person name="Tolwani R.J."/>
            <person name="Hamm D.A."/>
            <person name="Tian L."/>
            <person name="Sharer J.D."/>
            <person name="Vockley J."/>
            <person name="Rinaldo P."/>
            <person name="Matern D."/>
            <person name="Schoeb T.R."/>
            <person name="Wood P.A."/>
        </authorList>
    </citation>
    <scope>FUNCTION</scope>
    <scope>CATALYTIC ACTIVITY</scope>
    <scope>PATHWAY</scope>
    <scope>DISRUPTION PHENOTYPE</scope>
</reference>
<reference key="4">
    <citation type="journal article" date="2010" name="Cell">
        <title>A tissue-specific atlas of mouse protein phosphorylation and expression.</title>
        <authorList>
            <person name="Huttlin E.L."/>
            <person name="Jedrychowski M.P."/>
            <person name="Elias J.E."/>
            <person name="Goswami T."/>
            <person name="Rad R."/>
            <person name="Beausoleil S.A."/>
            <person name="Villen J."/>
            <person name="Haas W."/>
            <person name="Sowa M.E."/>
            <person name="Gygi S.P."/>
        </authorList>
    </citation>
    <scope>PHOSPHORYLATION [LARGE SCALE ANALYSIS] AT THR-351</scope>
    <scope>IDENTIFICATION BY MASS SPECTROMETRY [LARGE SCALE ANALYSIS]</scope>
    <source>
        <tissue>Brain</tissue>
        <tissue>Brown adipose tissue</tissue>
        <tissue>Heart</tissue>
        <tissue>Kidney</tissue>
        <tissue>Liver</tissue>
        <tissue>Lung</tissue>
        <tissue>Pancreas</tissue>
        <tissue>Spleen</tissue>
        <tissue>Testis</tissue>
    </source>
</reference>
<reference key="5">
    <citation type="journal article" date="2013" name="Mol. Cell">
        <title>SIRT5-mediated lysine desuccinylation impacts diverse metabolic pathways.</title>
        <authorList>
            <person name="Park J."/>
            <person name="Chen Y."/>
            <person name="Tishkoff D.X."/>
            <person name="Peng C."/>
            <person name="Tan M."/>
            <person name="Dai L."/>
            <person name="Xie Z."/>
            <person name="Zhang Y."/>
            <person name="Zwaans B.M."/>
            <person name="Skinner M.E."/>
            <person name="Lombard D.B."/>
            <person name="Zhao Y."/>
        </authorList>
    </citation>
    <scope>SUCCINYLATION [LARGE SCALE ANALYSIS] AT LYS-30; LYS-69; LYS-179; LYS-212; LYS-217; LYS-235; LYS-259 AND LYS-271</scope>
    <scope>IDENTIFICATION BY MASS SPECTROMETRY [LARGE SCALE ANALYSIS]</scope>
    <source>
        <tissue>Liver</tissue>
    </source>
</reference>
<reference key="6">
    <citation type="journal article" date="2013" name="Proc. Natl. Acad. Sci. U.S.A.">
        <title>Label-free quantitative proteomics of the lysine acetylome in mitochondria identifies substrates of SIRT3 in metabolic pathways.</title>
        <authorList>
            <person name="Rardin M.J."/>
            <person name="Newman J.C."/>
            <person name="Held J.M."/>
            <person name="Cusack M.P."/>
            <person name="Sorensen D.J."/>
            <person name="Li B."/>
            <person name="Schilling B."/>
            <person name="Mooney S.D."/>
            <person name="Kahn C.R."/>
            <person name="Verdin E."/>
            <person name="Gibson B.W."/>
        </authorList>
    </citation>
    <scope>ACETYLATION [LARGE SCALE ANALYSIS] AT LYS-30; LYS-69; LYS-79; LYS-212; LYS-217; LYS-235; LYS-259; LYS-271 AND LYS-301</scope>
    <scope>IDENTIFICATION BY MASS SPECTROMETRY [LARGE SCALE ANALYSIS]</scope>
    <source>
        <tissue>Liver</tissue>
    </source>
</reference>
<organism>
    <name type="scientific">Mus musculus</name>
    <name type="common">Mouse</name>
    <dbReference type="NCBI Taxonomy" id="10090"/>
    <lineage>
        <taxon>Eukaryota</taxon>
        <taxon>Metazoa</taxon>
        <taxon>Chordata</taxon>
        <taxon>Craniata</taxon>
        <taxon>Vertebrata</taxon>
        <taxon>Euteleostomi</taxon>
        <taxon>Mammalia</taxon>
        <taxon>Eutheria</taxon>
        <taxon>Euarchontoglires</taxon>
        <taxon>Glires</taxon>
        <taxon>Rodentia</taxon>
        <taxon>Myomorpha</taxon>
        <taxon>Muroidea</taxon>
        <taxon>Muridae</taxon>
        <taxon>Murinae</taxon>
        <taxon>Mus</taxon>
        <taxon>Mus</taxon>
    </lineage>
</organism>
<feature type="transit peptide" description="Mitochondrion" evidence="1">
    <location>
        <begin position="1"/>
        <end position="25"/>
    </location>
</feature>
<feature type="chain" id="PRO_0000000504" description="Medium-chain specific acyl-CoA dehydrogenase, mitochondrial">
    <location>
        <begin position="26"/>
        <end position="421"/>
    </location>
</feature>
<feature type="active site" description="Proton acceptor" evidence="3">
    <location>
        <position position="401"/>
    </location>
</feature>
<feature type="binding site" description="in other chain" evidence="3">
    <location>
        <begin position="158"/>
        <end position="167"/>
    </location>
    <ligand>
        <name>FAD</name>
        <dbReference type="ChEBI" id="CHEBI:57692"/>
        <note>ligand shared between dimeric partners</note>
    </ligand>
</feature>
<feature type="binding site" evidence="3">
    <location>
        <position position="167"/>
    </location>
    <ligand>
        <name>octanoyl-CoA</name>
        <dbReference type="ChEBI" id="CHEBI:57386"/>
    </ligand>
</feature>
<feature type="binding site" description="in other chain" evidence="3">
    <location>
        <begin position="191"/>
        <end position="193"/>
    </location>
    <ligand>
        <name>FAD</name>
        <dbReference type="ChEBI" id="CHEBI:57692"/>
        <note>ligand shared between dimeric partners</note>
    </ligand>
</feature>
<feature type="binding site" evidence="3">
    <location>
        <position position="216"/>
    </location>
    <ligand>
        <name>octanoyl-CoA</name>
        <dbReference type="ChEBI" id="CHEBI:57386"/>
    </ligand>
</feature>
<feature type="binding site" evidence="3">
    <location>
        <position position="278"/>
    </location>
    <ligand>
        <name>octanoyl-CoA</name>
        <dbReference type="ChEBI" id="CHEBI:57386"/>
    </ligand>
</feature>
<feature type="binding site" evidence="3">
    <location>
        <position position="281"/>
    </location>
    <ligand>
        <name>octanoyl-CoA</name>
        <dbReference type="ChEBI" id="CHEBI:57386"/>
    </ligand>
</feature>
<feature type="binding site" evidence="3">
    <location>
        <begin position="306"/>
        <end position="308"/>
    </location>
    <ligand>
        <name>FAD</name>
        <dbReference type="ChEBI" id="CHEBI:57692"/>
        <note>ligand shared between dimeric partners</note>
    </ligand>
</feature>
<feature type="binding site" description="in other chain" evidence="3">
    <location>
        <begin position="316"/>
        <end position="317"/>
    </location>
    <ligand>
        <name>FAD</name>
        <dbReference type="ChEBI" id="CHEBI:57692"/>
        <note>ligand shared between dimeric partners</note>
    </ligand>
</feature>
<feature type="binding site" evidence="3">
    <location>
        <position position="349"/>
    </location>
    <ligand>
        <name>octanoyl-CoA</name>
        <dbReference type="ChEBI" id="CHEBI:57386"/>
    </ligand>
</feature>
<feature type="binding site" evidence="3">
    <location>
        <position position="351"/>
    </location>
    <ligand>
        <name>octanoyl-CoA</name>
        <dbReference type="ChEBI" id="CHEBI:57386"/>
    </ligand>
</feature>
<feature type="binding site" evidence="3">
    <location>
        <begin position="374"/>
        <end position="378"/>
    </location>
    <ligand>
        <name>FAD</name>
        <dbReference type="ChEBI" id="CHEBI:57692"/>
        <note>ligand shared between dimeric partners</note>
    </ligand>
</feature>
<feature type="binding site" evidence="3">
    <location>
        <position position="401"/>
    </location>
    <ligand>
        <name>octanoyl-CoA</name>
        <dbReference type="ChEBI" id="CHEBI:57386"/>
    </ligand>
</feature>
<feature type="binding site" description="in other chain" evidence="3">
    <location>
        <begin position="402"/>
        <end position="405"/>
    </location>
    <ligand>
        <name>FAD</name>
        <dbReference type="ChEBI" id="CHEBI:57692"/>
        <note>ligand shared between dimeric partners</note>
    </ligand>
</feature>
<feature type="modified residue" description="N6-acetyllysine; alternate" evidence="10">
    <location>
        <position position="30"/>
    </location>
</feature>
<feature type="modified residue" description="N6-succinyllysine; alternate" evidence="11">
    <location>
        <position position="30"/>
    </location>
</feature>
<feature type="modified residue" description="N6-acetyllysine; alternate" evidence="10">
    <location>
        <position position="69"/>
    </location>
</feature>
<feature type="modified residue" description="N6-succinyllysine; alternate" evidence="11">
    <location>
        <position position="69"/>
    </location>
</feature>
<feature type="modified residue" description="N6-acetyllysine" evidence="10">
    <location>
        <position position="79"/>
    </location>
</feature>
<feature type="modified residue" description="N6-succinyllysine" evidence="11">
    <location>
        <position position="179"/>
    </location>
</feature>
<feature type="modified residue" description="N6-acetyllysine; alternate" evidence="10">
    <location>
        <position position="212"/>
    </location>
</feature>
<feature type="modified residue" description="N6-succinyllysine; alternate" evidence="11">
    <location>
        <position position="212"/>
    </location>
</feature>
<feature type="modified residue" description="N6-acetyllysine; alternate" evidence="10">
    <location>
        <position position="217"/>
    </location>
</feature>
<feature type="modified residue" description="N6-succinyllysine; alternate" evidence="11">
    <location>
        <position position="217"/>
    </location>
</feature>
<feature type="modified residue" description="N6-acetyllysine; alternate" evidence="10">
    <location>
        <position position="235"/>
    </location>
</feature>
<feature type="modified residue" description="N6-succinyllysine; alternate" evidence="11">
    <location>
        <position position="235"/>
    </location>
</feature>
<feature type="modified residue" description="N6-acetyllysine; alternate" evidence="10">
    <location>
        <position position="259"/>
    </location>
</feature>
<feature type="modified residue" description="N6-succinyllysine; alternate" evidence="11">
    <location>
        <position position="259"/>
    </location>
</feature>
<feature type="modified residue" description="N6-acetyllysine; alternate" evidence="10">
    <location>
        <position position="271"/>
    </location>
</feature>
<feature type="modified residue" description="N6-succinyllysine; alternate" evidence="11">
    <location>
        <position position="271"/>
    </location>
</feature>
<feature type="modified residue" description="N6-acetyllysine" evidence="10">
    <location>
        <position position="301"/>
    </location>
</feature>
<feature type="modified residue" description="Phosphothreonine" evidence="9">
    <location>
        <position position="351"/>
    </location>
</feature>
<feature type="sequence conflict" description="In Ref. 2; S48759." evidence="6" ref="2">
    <original>L</original>
    <variation>I</variation>
    <location>
        <position position="135"/>
    </location>
</feature>
<feature type="sequence conflict" description="In Ref. 2; S48761." evidence="6" ref="2">
    <original>V</original>
    <variation>A</variation>
    <location>
        <position position="184"/>
    </location>
</feature>
<name>ACADM_MOUSE</name>
<comment type="function">
    <text evidence="2 4">Medium-chain specific acyl-CoA dehydrogenase is one of the acyl-CoA dehydrogenases that catalyze the first step of mitochondrial fatty acid beta-oxidation, an aerobic process breaking down fatty acids into acetyl-CoA and allowing the production of energy from fats (PubMed:16121256). The first step of fatty acid beta-oxidation consists in the removal of one hydrogen from C-2 and C-3 of the straight-chain fatty acyl-CoA thioester, resulting in the formation of trans-2-enoyl-CoA (PubMed:16121256). Electron transfer flavoprotein (ETF) is the electron acceptor that transfers electrons to the main mitochondrial respiratory chain via ETF-ubiquinone oxidoreductase (ETF dehydrogenase) (By similarity). Among the different mitochondrial acyl-CoA dehydrogenases, medium-chain specific acyl-CoA dehydrogenase acts specifically on acyl-CoAs with saturated 6 to 12 carbons long primary chains (PubMed:16121256).</text>
</comment>
<comment type="catalytic activity">
    <reaction evidence="4">
        <text>a medium-chain 2,3-saturated fatty acyl-CoA + oxidized [electron-transfer flavoprotein] + H(+) = a medium-chain (2E)-enoyl-CoA + reduced [electron-transfer flavoprotein]</text>
        <dbReference type="Rhea" id="RHEA:14477"/>
        <dbReference type="Rhea" id="RHEA-COMP:10685"/>
        <dbReference type="Rhea" id="RHEA-COMP:10686"/>
        <dbReference type="ChEBI" id="CHEBI:15378"/>
        <dbReference type="ChEBI" id="CHEBI:57692"/>
        <dbReference type="ChEBI" id="CHEBI:58307"/>
        <dbReference type="ChEBI" id="CHEBI:83723"/>
        <dbReference type="ChEBI" id="CHEBI:83726"/>
        <dbReference type="EC" id="1.3.8.7"/>
    </reaction>
    <physiologicalReaction direction="left-to-right" evidence="4">
        <dbReference type="Rhea" id="RHEA:14478"/>
    </physiologicalReaction>
</comment>
<comment type="catalytic activity">
    <reaction evidence="1">
        <text>pentanoyl-CoA + oxidized [electron-transfer flavoprotein] + H(+) = (2E)-pentenoyl-CoA + reduced [electron-transfer flavoprotein]</text>
        <dbReference type="Rhea" id="RHEA:43456"/>
        <dbReference type="Rhea" id="RHEA-COMP:10685"/>
        <dbReference type="Rhea" id="RHEA-COMP:10686"/>
        <dbReference type="ChEBI" id="CHEBI:15378"/>
        <dbReference type="ChEBI" id="CHEBI:57389"/>
        <dbReference type="ChEBI" id="CHEBI:57692"/>
        <dbReference type="ChEBI" id="CHEBI:58307"/>
        <dbReference type="ChEBI" id="CHEBI:86160"/>
    </reaction>
    <physiologicalReaction direction="left-to-right" evidence="1">
        <dbReference type="Rhea" id="RHEA:43457"/>
    </physiologicalReaction>
</comment>
<comment type="catalytic activity">
    <reaction evidence="2">
        <text>hexanoyl-CoA + oxidized [electron-transfer flavoprotein] + H(+) = (2E)-hexenoyl-CoA + reduced [electron-transfer flavoprotein]</text>
        <dbReference type="Rhea" id="RHEA:43464"/>
        <dbReference type="Rhea" id="RHEA-COMP:10685"/>
        <dbReference type="Rhea" id="RHEA-COMP:10686"/>
        <dbReference type="ChEBI" id="CHEBI:15378"/>
        <dbReference type="ChEBI" id="CHEBI:57692"/>
        <dbReference type="ChEBI" id="CHEBI:58307"/>
        <dbReference type="ChEBI" id="CHEBI:62077"/>
        <dbReference type="ChEBI" id="CHEBI:62620"/>
    </reaction>
    <physiologicalReaction direction="left-to-right" evidence="2">
        <dbReference type="Rhea" id="RHEA:43465"/>
    </physiologicalReaction>
</comment>
<comment type="catalytic activity">
    <reaction evidence="4">
        <text>octanoyl-CoA + oxidized [electron-transfer flavoprotein] + H(+) = (2E)-octenoyl-CoA + reduced [electron-transfer flavoprotein]</text>
        <dbReference type="Rhea" id="RHEA:48180"/>
        <dbReference type="Rhea" id="RHEA-COMP:10685"/>
        <dbReference type="Rhea" id="RHEA-COMP:10686"/>
        <dbReference type="ChEBI" id="CHEBI:15378"/>
        <dbReference type="ChEBI" id="CHEBI:57386"/>
        <dbReference type="ChEBI" id="CHEBI:57692"/>
        <dbReference type="ChEBI" id="CHEBI:58307"/>
        <dbReference type="ChEBI" id="CHEBI:62242"/>
    </reaction>
    <physiologicalReaction direction="left-to-right" evidence="4">
        <dbReference type="Rhea" id="RHEA:48181"/>
    </physiologicalReaction>
</comment>
<comment type="catalytic activity">
    <reaction evidence="2">
        <text>decanoyl-CoA + oxidized [electron-transfer flavoprotein] + H(+) = (2E)-decenoyl-CoA + reduced [electron-transfer flavoprotein]</text>
        <dbReference type="Rhea" id="RHEA:48176"/>
        <dbReference type="Rhea" id="RHEA-COMP:10685"/>
        <dbReference type="Rhea" id="RHEA-COMP:10686"/>
        <dbReference type="ChEBI" id="CHEBI:15378"/>
        <dbReference type="ChEBI" id="CHEBI:57692"/>
        <dbReference type="ChEBI" id="CHEBI:58307"/>
        <dbReference type="ChEBI" id="CHEBI:61406"/>
        <dbReference type="ChEBI" id="CHEBI:61430"/>
    </reaction>
    <physiologicalReaction direction="left-to-right" evidence="2">
        <dbReference type="Rhea" id="RHEA:48177"/>
    </physiologicalReaction>
</comment>
<comment type="catalytic activity">
    <reaction evidence="2">
        <text>dodecanoyl-CoA + oxidized [electron-transfer flavoprotein] + H(+) = (2E)-dodecenoyl-CoA + reduced [electron-transfer flavoprotein]</text>
        <dbReference type="Rhea" id="RHEA:47296"/>
        <dbReference type="Rhea" id="RHEA-COMP:10685"/>
        <dbReference type="Rhea" id="RHEA-COMP:10686"/>
        <dbReference type="ChEBI" id="CHEBI:15378"/>
        <dbReference type="ChEBI" id="CHEBI:57330"/>
        <dbReference type="ChEBI" id="CHEBI:57375"/>
        <dbReference type="ChEBI" id="CHEBI:57692"/>
        <dbReference type="ChEBI" id="CHEBI:58307"/>
    </reaction>
    <physiologicalReaction direction="left-to-right" evidence="2">
        <dbReference type="Rhea" id="RHEA:47297"/>
    </physiologicalReaction>
</comment>
<comment type="catalytic activity">
    <reaction evidence="2">
        <text>tetradecanoyl-CoA + oxidized [electron-transfer flavoprotein] + H(+) = (2E)-tetradecenoyl-CoA + reduced [electron-transfer flavoprotein]</text>
        <dbReference type="Rhea" id="RHEA:47316"/>
        <dbReference type="Rhea" id="RHEA-COMP:10685"/>
        <dbReference type="Rhea" id="RHEA-COMP:10686"/>
        <dbReference type="ChEBI" id="CHEBI:15378"/>
        <dbReference type="ChEBI" id="CHEBI:57385"/>
        <dbReference type="ChEBI" id="CHEBI:57692"/>
        <dbReference type="ChEBI" id="CHEBI:58307"/>
        <dbReference type="ChEBI" id="CHEBI:61405"/>
    </reaction>
    <physiologicalReaction direction="left-to-right" evidence="2">
        <dbReference type="Rhea" id="RHEA:47317"/>
    </physiologicalReaction>
</comment>
<comment type="catalytic activity">
    <reaction evidence="4">
        <text>oxidized [electron-transfer flavoprotein] + hexadecanoyl-CoA + H(+) = (2E)-hexadecenoyl-CoA + reduced [electron-transfer flavoprotein]</text>
        <dbReference type="Rhea" id="RHEA:43448"/>
        <dbReference type="Rhea" id="RHEA-COMP:10685"/>
        <dbReference type="Rhea" id="RHEA-COMP:10686"/>
        <dbReference type="ChEBI" id="CHEBI:15378"/>
        <dbReference type="ChEBI" id="CHEBI:57379"/>
        <dbReference type="ChEBI" id="CHEBI:57692"/>
        <dbReference type="ChEBI" id="CHEBI:58307"/>
        <dbReference type="ChEBI" id="CHEBI:61526"/>
    </reaction>
    <physiologicalReaction direction="left-to-right" evidence="4">
        <dbReference type="Rhea" id="RHEA:43449"/>
    </physiologicalReaction>
</comment>
<comment type="cofactor">
    <cofactor evidence="2">
        <name>FAD</name>
        <dbReference type="ChEBI" id="CHEBI:57692"/>
    </cofactor>
</comment>
<comment type="pathway">
    <text evidence="4">Lipid metabolism; mitochondrial fatty acid beta-oxidation.</text>
</comment>
<comment type="subunit">
    <text evidence="2">Homotetramer. Interacts with the heterodimeric electron transfer flavoprotein ETF.</text>
</comment>
<comment type="subcellular location">
    <subcellularLocation>
        <location evidence="1">Mitochondrion matrix</location>
    </subcellularLocation>
</comment>
<comment type="PTM">
    <text evidence="2">Acetylated. Could occur at proximity of the cofactor-binding sites and reduce the catalytic activity. Could be deacetylated by SIRT3.</text>
</comment>
<comment type="disruption phenotype">
    <text evidence="4">Mice lacking Mcad show increased neonatal mortality (PubMed:16121256). They display hypothermia and cold intolerance upon fasting (PubMed:16121256). Their serum and bile acylcarnitine profile is also different from wild-type mice, with an elevation of serum decenoylcarnitine compared to wild-type mice (PubMed:16121256). They also display hepatic steatosis following fast periods (PubMed:16121256). They develop significantly elevated concentrations of urinary adipic, suberic, and sebacic acids and hexanoylglycine (PubMed:16121256).</text>
</comment>
<comment type="similarity">
    <text evidence="6">Belongs to the acyl-CoA dehydrogenase family.</text>
</comment>
<keyword id="KW-0007">Acetylation</keyword>
<keyword id="KW-0274">FAD</keyword>
<keyword id="KW-0276">Fatty acid metabolism</keyword>
<keyword id="KW-0285">Flavoprotein</keyword>
<keyword id="KW-0443">Lipid metabolism</keyword>
<keyword id="KW-0496">Mitochondrion</keyword>
<keyword id="KW-0560">Oxidoreductase</keyword>
<keyword id="KW-0597">Phosphoprotein</keyword>
<keyword id="KW-1185">Reference proteome</keyword>
<keyword id="KW-0809">Transit peptide</keyword>
<sequence length="421" mass="46481">MAAAFRRGCRVLRSVSHFECRTQHSKAAHKQEPGLGFSFELTEQQKEFQATARKFAREEIIPVAPEYDKSGEYPFPLIKRAWELGLINAHIPESCGGLGLGTFDACLITEELAYGCTGVQTAIEANSLGQMPVILAGNDQQKKKYLGRMTEQPMMCAYCVTEPSAGSDVAAIKTKAEKKGDEYVINGQKMWITNGGKANWYFLLARSNPDPKVPASKAFTGFIVEADTPGIHIGKKELNMGQRCSDTRGIAFEDVRVPKENVLIGEGAGFKIAMGAFDRTRPTVAAGAVGLAQRALDEATKYALDRKTFGKLLVEHQGVSFLLAEMAMKVELARLSYQRAAWEVDSGRRNTYYASIAKAFAGDIANQLATDAVQIFGGYGFNTEYPVEKLMRDAKIYQIYEGTAQIQRLIIAREHIEKYKN</sequence>
<gene>
    <name evidence="8" type="primary">Acadm</name>
</gene>
<dbReference type="EC" id="1.3.8.7" evidence="4"/>
<dbReference type="EMBL" id="U07159">
    <property type="protein sequence ID" value="AAA76733.1"/>
    <property type="molecule type" value="mRNA"/>
</dbReference>
<dbReference type="EMBL" id="S48761">
    <property type="status" value="NOT_ANNOTATED_CDS"/>
    <property type="molecule type" value="Genomic_DNA"/>
</dbReference>
<dbReference type="EMBL" id="S48759">
    <property type="status" value="NOT_ANNOTATED_CDS"/>
    <property type="molecule type" value="Genomic_DNA"/>
</dbReference>
<dbReference type="CCDS" id="CCDS17924.1"/>
<dbReference type="PIR" id="A55724">
    <property type="entry name" value="A55724"/>
</dbReference>
<dbReference type="RefSeq" id="NP_031408.1">
    <property type="nucleotide sequence ID" value="NM_007382.5"/>
</dbReference>
<dbReference type="SMR" id="P45952"/>
<dbReference type="BioGRID" id="197912">
    <property type="interactions" value="33"/>
</dbReference>
<dbReference type="FunCoup" id="P45952">
    <property type="interactions" value="1546"/>
</dbReference>
<dbReference type="IntAct" id="P45952">
    <property type="interactions" value="7"/>
</dbReference>
<dbReference type="MINT" id="P45952"/>
<dbReference type="STRING" id="10090.ENSMUSP00000072483"/>
<dbReference type="GlyGen" id="P45952">
    <property type="glycosylation" value="1 site, 1 O-linked glycan (1 site)"/>
</dbReference>
<dbReference type="iPTMnet" id="P45952"/>
<dbReference type="PhosphoSitePlus" id="P45952"/>
<dbReference type="SwissPalm" id="P45952"/>
<dbReference type="jPOST" id="P45952"/>
<dbReference type="PaxDb" id="10090-ENSMUSP00000072483"/>
<dbReference type="PeptideAtlas" id="P45952"/>
<dbReference type="ProteomicsDB" id="296438"/>
<dbReference type="Pumba" id="P45952"/>
<dbReference type="Antibodypedia" id="1642">
    <property type="antibodies" value="466 antibodies from 38 providers"/>
</dbReference>
<dbReference type="DNASU" id="11364"/>
<dbReference type="Ensembl" id="ENSMUST00000072697.13">
    <property type="protein sequence ID" value="ENSMUSP00000072483.7"/>
    <property type="gene ID" value="ENSMUSG00000062908.13"/>
</dbReference>
<dbReference type="GeneID" id="11364"/>
<dbReference type="KEGG" id="mmu:11364"/>
<dbReference type="UCSC" id="uc008ruj.2">
    <property type="organism name" value="mouse"/>
</dbReference>
<dbReference type="AGR" id="MGI:87867"/>
<dbReference type="CTD" id="34"/>
<dbReference type="MGI" id="MGI:87867">
    <property type="gene designation" value="Acadm"/>
</dbReference>
<dbReference type="VEuPathDB" id="HostDB:ENSMUSG00000062908"/>
<dbReference type="eggNOG" id="KOG0140">
    <property type="taxonomic scope" value="Eukaryota"/>
</dbReference>
<dbReference type="GeneTree" id="ENSGT00940000158429"/>
<dbReference type="HOGENOM" id="CLU_018204_0_2_1"/>
<dbReference type="InParanoid" id="P45952"/>
<dbReference type="OMA" id="NYDKMGV"/>
<dbReference type="OrthoDB" id="434771at2759"/>
<dbReference type="PhylomeDB" id="P45952"/>
<dbReference type="TreeFam" id="TF105020"/>
<dbReference type="Reactome" id="R-MMU-77288">
    <property type="pathway name" value="mitochondrial fatty acid beta-oxidation of unsaturated fatty acids"/>
</dbReference>
<dbReference type="Reactome" id="R-MMU-77346">
    <property type="pathway name" value="Beta oxidation of decanoyl-CoA to octanoyl-CoA-CoA"/>
</dbReference>
<dbReference type="Reactome" id="R-MMU-77348">
    <property type="pathway name" value="Beta oxidation of octanoyl-CoA to hexanoyl-CoA"/>
</dbReference>
<dbReference type="UniPathway" id="UPA00660"/>
<dbReference type="BioGRID-ORCS" id="11364">
    <property type="hits" value="2 hits in 78 CRISPR screens"/>
</dbReference>
<dbReference type="ChiTaRS" id="Acadm">
    <property type="organism name" value="mouse"/>
</dbReference>
<dbReference type="PRO" id="PR:P45952"/>
<dbReference type="Proteomes" id="UP000000589">
    <property type="component" value="Chromosome 3"/>
</dbReference>
<dbReference type="RNAct" id="P45952">
    <property type="molecule type" value="protein"/>
</dbReference>
<dbReference type="Bgee" id="ENSMUSG00000062908">
    <property type="expression patterns" value="Expressed in heart right ventricle and 267 other cell types or tissues"/>
</dbReference>
<dbReference type="ExpressionAtlas" id="P45952">
    <property type="expression patterns" value="baseline and differential"/>
</dbReference>
<dbReference type="GO" id="GO:0030424">
    <property type="term" value="C:axon"/>
    <property type="evidence" value="ECO:0007669"/>
    <property type="project" value="Ensembl"/>
</dbReference>
<dbReference type="GO" id="GO:0005759">
    <property type="term" value="C:mitochondrial matrix"/>
    <property type="evidence" value="ECO:0007669"/>
    <property type="project" value="UniProtKB-SubCell"/>
</dbReference>
<dbReference type="GO" id="GO:0031966">
    <property type="term" value="C:mitochondrial membrane"/>
    <property type="evidence" value="ECO:0007669"/>
    <property type="project" value="Ensembl"/>
</dbReference>
<dbReference type="GO" id="GO:0005739">
    <property type="term" value="C:mitochondrion"/>
    <property type="evidence" value="ECO:0000314"/>
    <property type="project" value="MGI"/>
</dbReference>
<dbReference type="GO" id="GO:0003995">
    <property type="term" value="F:acyl-CoA dehydrogenase activity"/>
    <property type="evidence" value="ECO:0000250"/>
    <property type="project" value="UniProtKB"/>
</dbReference>
<dbReference type="GO" id="GO:0050660">
    <property type="term" value="F:flavin adenine dinucleotide binding"/>
    <property type="evidence" value="ECO:0007669"/>
    <property type="project" value="InterPro"/>
</dbReference>
<dbReference type="GO" id="GO:0042802">
    <property type="term" value="F:identical protein binding"/>
    <property type="evidence" value="ECO:0007669"/>
    <property type="project" value="Ensembl"/>
</dbReference>
<dbReference type="GO" id="GO:0070991">
    <property type="term" value="F:medium-chain fatty acyl-CoA dehydrogenase activity"/>
    <property type="evidence" value="ECO:0000315"/>
    <property type="project" value="BHF-UCL"/>
</dbReference>
<dbReference type="GO" id="GO:0055007">
    <property type="term" value="P:cardiac muscle cell differentiation"/>
    <property type="evidence" value="ECO:0000315"/>
    <property type="project" value="MGI"/>
</dbReference>
<dbReference type="GO" id="GO:0045329">
    <property type="term" value="P:carnitine biosynthetic process"/>
    <property type="evidence" value="ECO:0007669"/>
    <property type="project" value="Ensembl"/>
</dbReference>
<dbReference type="GO" id="GO:0009437">
    <property type="term" value="P:carnitine metabolic process"/>
    <property type="evidence" value="ECO:0000315"/>
    <property type="project" value="MGI"/>
</dbReference>
<dbReference type="GO" id="GO:0019254">
    <property type="term" value="P:carnitine metabolic process, CoA-linked"/>
    <property type="evidence" value="ECO:0000315"/>
    <property type="project" value="BHF-UCL"/>
</dbReference>
<dbReference type="GO" id="GO:0006635">
    <property type="term" value="P:fatty acid beta-oxidation"/>
    <property type="evidence" value="ECO:0000250"/>
    <property type="project" value="UniProtKB"/>
</dbReference>
<dbReference type="GO" id="GO:0033539">
    <property type="term" value="P:fatty acid beta-oxidation using acyl-CoA dehydrogenase"/>
    <property type="evidence" value="ECO:0000315"/>
    <property type="project" value="BHF-UCL"/>
</dbReference>
<dbReference type="GO" id="GO:0005978">
    <property type="term" value="P:glycogen biosynthetic process"/>
    <property type="evidence" value="ECO:0000315"/>
    <property type="project" value="BHF-UCL"/>
</dbReference>
<dbReference type="GO" id="GO:0007507">
    <property type="term" value="P:heart development"/>
    <property type="evidence" value="ECO:0000315"/>
    <property type="project" value="MGI"/>
</dbReference>
<dbReference type="GO" id="GO:0001889">
    <property type="term" value="P:liver development"/>
    <property type="evidence" value="ECO:0000315"/>
    <property type="project" value="MGI"/>
</dbReference>
<dbReference type="GO" id="GO:0051793">
    <property type="term" value="P:medium-chain fatty acid catabolic process"/>
    <property type="evidence" value="ECO:0007669"/>
    <property type="project" value="Ensembl"/>
</dbReference>
<dbReference type="GO" id="GO:0051791">
    <property type="term" value="P:medium-chain fatty acid metabolic process"/>
    <property type="evidence" value="ECO:0000315"/>
    <property type="project" value="BHF-UCL"/>
</dbReference>
<dbReference type="GO" id="GO:0006082">
    <property type="term" value="P:organic acid metabolic process"/>
    <property type="evidence" value="ECO:0000315"/>
    <property type="project" value="MGI"/>
</dbReference>
<dbReference type="GO" id="GO:0009791">
    <property type="term" value="P:post-embryonic development"/>
    <property type="evidence" value="ECO:0000315"/>
    <property type="project" value="MGI"/>
</dbReference>
<dbReference type="GO" id="GO:0006111">
    <property type="term" value="P:regulation of gluconeogenesis"/>
    <property type="evidence" value="ECO:0000315"/>
    <property type="project" value="BHF-UCL"/>
</dbReference>
<dbReference type="GO" id="GO:0009409">
    <property type="term" value="P:response to cold"/>
    <property type="evidence" value="ECO:0000315"/>
    <property type="project" value="MGI"/>
</dbReference>
<dbReference type="GO" id="GO:0042594">
    <property type="term" value="P:response to starvation"/>
    <property type="evidence" value="ECO:0000315"/>
    <property type="project" value="MGI"/>
</dbReference>
<dbReference type="CDD" id="cd01157">
    <property type="entry name" value="MCAD"/>
    <property type="match status" value="1"/>
</dbReference>
<dbReference type="FunFam" id="1.10.540.10:FF:000010">
    <property type="entry name" value="Medium-chain specific acyl-CoA dehydrogenase, mitochondrial"/>
    <property type="match status" value="1"/>
</dbReference>
<dbReference type="FunFam" id="1.20.140.10:FF:000011">
    <property type="entry name" value="Medium-chain specific acyl-CoA dehydrogenase, mitochondrial"/>
    <property type="match status" value="1"/>
</dbReference>
<dbReference type="FunFam" id="2.40.110.10:FF:000007">
    <property type="entry name" value="Medium-chain specific acyl-CoA dehydrogenase, mitochondrial"/>
    <property type="match status" value="1"/>
</dbReference>
<dbReference type="Gene3D" id="1.10.540.10">
    <property type="entry name" value="Acyl-CoA dehydrogenase/oxidase, N-terminal domain"/>
    <property type="match status" value="1"/>
</dbReference>
<dbReference type="Gene3D" id="2.40.110.10">
    <property type="entry name" value="Butyryl-CoA Dehydrogenase, subunit A, domain 2"/>
    <property type="match status" value="1"/>
</dbReference>
<dbReference type="Gene3D" id="1.20.140.10">
    <property type="entry name" value="Butyryl-CoA Dehydrogenase, subunit A, domain 3"/>
    <property type="match status" value="1"/>
</dbReference>
<dbReference type="InterPro" id="IPR050741">
    <property type="entry name" value="Acyl-CoA_dehydrogenase"/>
</dbReference>
<dbReference type="InterPro" id="IPR006089">
    <property type="entry name" value="Acyl-CoA_DH_CS"/>
</dbReference>
<dbReference type="InterPro" id="IPR006091">
    <property type="entry name" value="Acyl-CoA_Oxase/DH_mid-dom"/>
</dbReference>
<dbReference type="InterPro" id="IPR046373">
    <property type="entry name" value="Acyl-CoA_Oxase/DH_mid-dom_sf"/>
</dbReference>
<dbReference type="InterPro" id="IPR036250">
    <property type="entry name" value="AcylCo_DH-like_C"/>
</dbReference>
<dbReference type="InterPro" id="IPR009075">
    <property type="entry name" value="AcylCo_DH/oxidase_C"/>
</dbReference>
<dbReference type="InterPro" id="IPR013786">
    <property type="entry name" value="AcylCoA_DH/ox_N"/>
</dbReference>
<dbReference type="InterPro" id="IPR037069">
    <property type="entry name" value="AcylCoA_DH/ox_N_sf"/>
</dbReference>
<dbReference type="InterPro" id="IPR009100">
    <property type="entry name" value="AcylCoA_DH/oxidase_NM_dom_sf"/>
</dbReference>
<dbReference type="InterPro" id="IPR034180">
    <property type="entry name" value="MCAD"/>
</dbReference>
<dbReference type="PANTHER" id="PTHR48083:SF2">
    <property type="entry name" value="MEDIUM-CHAIN SPECIFIC ACYL-COA DEHYDROGENASE, MITOCHONDRIAL"/>
    <property type="match status" value="1"/>
</dbReference>
<dbReference type="PANTHER" id="PTHR48083">
    <property type="entry name" value="MEDIUM-CHAIN SPECIFIC ACYL-COA DEHYDROGENASE, MITOCHONDRIAL-RELATED"/>
    <property type="match status" value="1"/>
</dbReference>
<dbReference type="Pfam" id="PF00441">
    <property type="entry name" value="Acyl-CoA_dh_1"/>
    <property type="match status" value="1"/>
</dbReference>
<dbReference type="Pfam" id="PF02770">
    <property type="entry name" value="Acyl-CoA_dh_M"/>
    <property type="match status" value="1"/>
</dbReference>
<dbReference type="Pfam" id="PF02771">
    <property type="entry name" value="Acyl-CoA_dh_N"/>
    <property type="match status" value="1"/>
</dbReference>
<dbReference type="PIRSF" id="PIRSF016578">
    <property type="entry name" value="HsaA"/>
    <property type="match status" value="1"/>
</dbReference>
<dbReference type="SUPFAM" id="SSF47203">
    <property type="entry name" value="Acyl-CoA dehydrogenase C-terminal domain-like"/>
    <property type="match status" value="1"/>
</dbReference>
<dbReference type="SUPFAM" id="SSF56645">
    <property type="entry name" value="Acyl-CoA dehydrogenase NM domain-like"/>
    <property type="match status" value="1"/>
</dbReference>
<dbReference type="PROSITE" id="PS00072">
    <property type="entry name" value="ACYL_COA_DH_1"/>
    <property type="match status" value="1"/>
</dbReference>
<dbReference type="PROSITE" id="PS00073">
    <property type="entry name" value="ACYL_COA_DH_2"/>
    <property type="match status" value="1"/>
</dbReference>
<proteinExistence type="evidence at protein level"/>
<accession>P45952</accession>
<accession>Q64235</accession>
<protein>
    <recommendedName>
        <fullName evidence="7">Medium-chain specific acyl-CoA dehydrogenase, mitochondrial</fullName>
        <shortName evidence="5">MCAD</shortName>
        <ecNumber evidence="4">1.3.8.7</ecNumber>
    </recommendedName>
</protein>
<evidence type="ECO:0000250" key="1">
    <source>
        <dbReference type="UniProtKB" id="P08503"/>
    </source>
</evidence>
<evidence type="ECO:0000250" key="2">
    <source>
        <dbReference type="UniProtKB" id="P11310"/>
    </source>
</evidence>
<evidence type="ECO:0000250" key="3">
    <source>
        <dbReference type="UniProtKB" id="P41367"/>
    </source>
</evidence>
<evidence type="ECO:0000269" key="4">
    <source>
    </source>
</evidence>
<evidence type="ECO:0000303" key="5">
    <source>
    </source>
</evidence>
<evidence type="ECO:0000305" key="6"/>
<evidence type="ECO:0000305" key="7">
    <source>
    </source>
</evidence>
<evidence type="ECO:0000312" key="8">
    <source>
        <dbReference type="MGI" id="MGI:87867"/>
    </source>
</evidence>
<evidence type="ECO:0007744" key="9">
    <source>
    </source>
</evidence>
<evidence type="ECO:0007744" key="10">
    <source>
    </source>
</evidence>
<evidence type="ECO:0007744" key="11">
    <source>
    </source>
</evidence>